<sequence length="179" mass="20093">MLKVEERYTNAVPELQKFFNYGNIMQVPKLVKVVINTGVGEAVSNSKAMETAEADIVAIAGQHPVVTRAKRSVANFKLRAGMPIGLKVTLRGQRMYDFLNKLFFITLPRVRDFQGVPNTAFDERGNYTLGFKDHSVFPEIDFNKIEKPRGLEICIVTTANTPEEGKKLLELLGMPFSKD</sequence>
<evidence type="ECO:0000255" key="1">
    <source>
        <dbReference type="HAMAP-Rule" id="MF_01333"/>
    </source>
</evidence>
<evidence type="ECO:0000305" key="2"/>
<gene>
    <name evidence="1" type="primary">rplE</name>
    <name type="ordered locus">DehaBAV1_0463</name>
</gene>
<comment type="function">
    <text evidence="1">This is one of the proteins that bind and probably mediate the attachment of the 5S RNA into the large ribosomal subunit, where it forms part of the central protuberance. In the 70S ribosome it contacts protein S13 of the 30S subunit (bridge B1b), connecting the 2 subunits; this bridge is implicated in subunit movement. Contacts the P site tRNA; the 5S rRNA and some of its associated proteins might help stabilize positioning of ribosome-bound tRNAs.</text>
</comment>
<comment type="subunit">
    <text evidence="1">Part of the 50S ribosomal subunit; part of the 5S rRNA/L5/L18/L25 subcomplex. Contacts the 5S rRNA and the P site tRNA. Forms a bridge to the 30S subunit in the 70S ribosome.</text>
</comment>
<comment type="similarity">
    <text evidence="1">Belongs to the universal ribosomal protein uL5 family.</text>
</comment>
<keyword id="KW-0687">Ribonucleoprotein</keyword>
<keyword id="KW-0689">Ribosomal protein</keyword>
<keyword id="KW-0694">RNA-binding</keyword>
<keyword id="KW-0699">rRNA-binding</keyword>
<keyword id="KW-0820">tRNA-binding</keyword>
<dbReference type="EMBL" id="CP000688">
    <property type="protein sequence ID" value="ABQ17048.1"/>
    <property type="molecule type" value="Genomic_DNA"/>
</dbReference>
<dbReference type="SMR" id="A5FRX3"/>
<dbReference type="KEGG" id="deb:DehaBAV1_0463"/>
<dbReference type="PATRIC" id="fig|216389.18.peg.506"/>
<dbReference type="HOGENOM" id="CLU_061015_2_1_0"/>
<dbReference type="GO" id="GO:1990904">
    <property type="term" value="C:ribonucleoprotein complex"/>
    <property type="evidence" value="ECO:0007669"/>
    <property type="project" value="UniProtKB-KW"/>
</dbReference>
<dbReference type="GO" id="GO:0005840">
    <property type="term" value="C:ribosome"/>
    <property type="evidence" value="ECO:0007669"/>
    <property type="project" value="UniProtKB-KW"/>
</dbReference>
<dbReference type="GO" id="GO:0019843">
    <property type="term" value="F:rRNA binding"/>
    <property type="evidence" value="ECO:0007669"/>
    <property type="project" value="UniProtKB-UniRule"/>
</dbReference>
<dbReference type="GO" id="GO:0003735">
    <property type="term" value="F:structural constituent of ribosome"/>
    <property type="evidence" value="ECO:0007669"/>
    <property type="project" value="InterPro"/>
</dbReference>
<dbReference type="GO" id="GO:0000049">
    <property type="term" value="F:tRNA binding"/>
    <property type="evidence" value="ECO:0007669"/>
    <property type="project" value="UniProtKB-UniRule"/>
</dbReference>
<dbReference type="GO" id="GO:0006412">
    <property type="term" value="P:translation"/>
    <property type="evidence" value="ECO:0007669"/>
    <property type="project" value="UniProtKB-UniRule"/>
</dbReference>
<dbReference type="FunFam" id="3.30.1440.10:FF:000001">
    <property type="entry name" value="50S ribosomal protein L5"/>
    <property type="match status" value="1"/>
</dbReference>
<dbReference type="Gene3D" id="3.30.1440.10">
    <property type="match status" value="1"/>
</dbReference>
<dbReference type="HAMAP" id="MF_01333_B">
    <property type="entry name" value="Ribosomal_uL5_B"/>
    <property type="match status" value="1"/>
</dbReference>
<dbReference type="InterPro" id="IPR002132">
    <property type="entry name" value="Ribosomal_uL5"/>
</dbReference>
<dbReference type="InterPro" id="IPR020930">
    <property type="entry name" value="Ribosomal_uL5_bac-type"/>
</dbReference>
<dbReference type="InterPro" id="IPR031309">
    <property type="entry name" value="Ribosomal_uL5_C"/>
</dbReference>
<dbReference type="InterPro" id="IPR020929">
    <property type="entry name" value="Ribosomal_uL5_CS"/>
</dbReference>
<dbReference type="InterPro" id="IPR022803">
    <property type="entry name" value="Ribosomal_uL5_dom_sf"/>
</dbReference>
<dbReference type="InterPro" id="IPR031310">
    <property type="entry name" value="Ribosomal_uL5_N"/>
</dbReference>
<dbReference type="NCBIfam" id="NF000585">
    <property type="entry name" value="PRK00010.1"/>
    <property type="match status" value="1"/>
</dbReference>
<dbReference type="PANTHER" id="PTHR11994">
    <property type="entry name" value="60S RIBOSOMAL PROTEIN L11-RELATED"/>
    <property type="match status" value="1"/>
</dbReference>
<dbReference type="Pfam" id="PF00281">
    <property type="entry name" value="Ribosomal_L5"/>
    <property type="match status" value="1"/>
</dbReference>
<dbReference type="Pfam" id="PF00673">
    <property type="entry name" value="Ribosomal_L5_C"/>
    <property type="match status" value="1"/>
</dbReference>
<dbReference type="PIRSF" id="PIRSF002161">
    <property type="entry name" value="Ribosomal_L5"/>
    <property type="match status" value="1"/>
</dbReference>
<dbReference type="SUPFAM" id="SSF55282">
    <property type="entry name" value="RL5-like"/>
    <property type="match status" value="1"/>
</dbReference>
<dbReference type="PROSITE" id="PS00358">
    <property type="entry name" value="RIBOSOMAL_L5"/>
    <property type="match status" value="1"/>
</dbReference>
<name>RL5_DEHMB</name>
<reference key="1">
    <citation type="submission" date="2007-05" db="EMBL/GenBank/DDBJ databases">
        <title>Complete sequence of Dehalococcoides sp. BAV1.</title>
        <authorList>
            <consortium name="US DOE Joint Genome Institute"/>
            <person name="Copeland A."/>
            <person name="Lucas S."/>
            <person name="Lapidus A."/>
            <person name="Barry K."/>
            <person name="Detter J.C."/>
            <person name="Glavina del Rio T."/>
            <person name="Hammon N."/>
            <person name="Israni S."/>
            <person name="Pitluck S."/>
            <person name="Lowry S."/>
            <person name="Clum A."/>
            <person name="Schmutz J."/>
            <person name="Larimer F."/>
            <person name="Land M."/>
            <person name="Hauser L."/>
            <person name="Kyrpides N."/>
            <person name="Kim E."/>
            <person name="Ritalahti K.M."/>
            <person name="Loeffler F."/>
            <person name="Richardson P."/>
        </authorList>
    </citation>
    <scope>NUCLEOTIDE SEQUENCE [LARGE SCALE GENOMIC DNA]</scope>
    <source>
        <strain>ATCC BAA-2100 / JCM 16839 / KCTC 5957 / BAV1</strain>
    </source>
</reference>
<accession>A5FRX3</accession>
<proteinExistence type="inferred from homology"/>
<feature type="chain" id="PRO_1000086588" description="Large ribosomal subunit protein uL5">
    <location>
        <begin position="1"/>
        <end position="179"/>
    </location>
</feature>
<protein>
    <recommendedName>
        <fullName evidence="1">Large ribosomal subunit protein uL5</fullName>
    </recommendedName>
    <alternativeName>
        <fullName evidence="2">50S ribosomal protein L5</fullName>
    </alternativeName>
</protein>
<organism>
    <name type="scientific">Dehalococcoides mccartyi (strain ATCC BAA-2100 / JCM 16839 / KCTC 5957 / BAV1)</name>
    <dbReference type="NCBI Taxonomy" id="216389"/>
    <lineage>
        <taxon>Bacteria</taxon>
        <taxon>Bacillati</taxon>
        <taxon>Chloroflexota</taxon>
        <taxon>Dehalococcoidia</taxon>
        <taxon>Dehalococcoidales</taxon>
        <taxon>Dehalococcoidaceae</taxon>
        <taxon>Dehalococcoides</taxon>
    </lineage>
</organism>